<proteinExistence type="inferred from homology"/>
<accession>A1QYT1</accession>
<name>RECA_BORT9</name>
<evidence type="ECO:0000255" key="1">
    <source>
        <dbReference type="HAMAP-Rule" id="MF_00268"/>
    </source>
</evidence>
<gene>
    <name evidence="1" type="primary">recA</name>
    <name type="ordered locus">BT0131</name>
</gene>
<feature type="chain" id="PRO_1000193293" description="Protein RecA">
    <location>
        <begin position="1"/>
        <end position="363"/>
    </location>
</feature>
<feature type="binding site" evidence="1">
    <location>
        <begin position="79"/>
        <end position="86"/>
    </location>
    <ligand>
        <name>ATP</name>
        <dbReference type="ChEBI" id="CHEBI:30616"/>
    </ligand>
</feature>
<dbReference type="EMBL" id="CP000049">
    <property type="protein sequence ID" value="AAX17473.1"/>
    <property type="molecule type" value="Genomic_DNA"/>
</dbReference>
<dbReference type="RefSeq" id="WP_011772092.1">
    <property type="nucleotide sequence ID" value="NZ_CP073176.1"/>
</dbReference>
<dbReference type="SMR" id="A1QYT1"/>
<dbReference type="KEGG" id="btu:BT0131"/>
<dbReference type="eggNOG" id="COG0468">
    <property type="taxonomic scope" value="Bacteria"/>
</dbReference>
<dbReference type="HOGENOM" id="CLU_040469_3_2_12"/>
<dbReference type="Proteomes" id="UP000001205">
    <property type="component" value="Chromosome"/>
</dbReference>
<dbReference type="GO" id="GO:0005829">
    <property type="term" value="C:cytosol"/>
    <property type="evidence" value="ECO:0007669"/>
    <property type="project" value="TreeGrafter"/>
</dbReference>
<dbReference type="GO" id="GO:0005524">
    <property type="term" value="F:ATP binding"/>
    <property type="evidence" value="ECO:0007669"/>
    <property type="project" value="UniProtKB-UniRule"/>
</dbReference>
<dbReference type="GO" id="GO:0016887">
    <property type="term" value="F:ATP hydrolysis activity"/>
    <property type="evidence" value="ECO:0007669"/>
    <property type="project" value="InterPro"/>
</dbReference>
<dbReference type="GO" id="GO:0140664">
    <property type="term" value="F:ATP-dependent DNA damage sensor activity"/>
    <property type="evidence" value="ECO:0007669"/>
    <property type="project" value="InterPro"/>
</dbReference>
<dbReference type="GO" id="GO:0003684">
    <property type="term" value="F:damaged DNA binding"/>
    <property type="evidence" value="ECO:0007669"/>
    <property type="project" value="UniProtKB-UniRule"/>
</dbReference>
<dbReference type="GO" id="GO:0003697">
    <property type="term" value="F:single-stranded DNA binding"/>
    <property type="evidence" value="ECO:0007669"/>
    <property type="project" value="UniProtKB-UniRule"/>
</dbReference>
<dbReference type="GO" id="GO:0006310">
    <property type="term" value="P:DNA recombination"/>
    <property type="evidence" value="ECO:0007669"/>
    <property type="project" value="UniProtKB-UniRule"/>
</dbReference>
<dbReference type="GO" id="GO:0006281">
    <property type="term" value="P:DNA repair"/>
    <property type="evidence" value="ECO:0007669"/>
    <property type="project" value="UniProtKB-UniRule"/>
</dbReference>
<dbReference type="GO" id="GO:0009432">
    <property type="term" value="P:SOS response"/>
    <property type="evidence" value="ECO:0007669"/>
    <property type="project" value="UniProtKB-UniRule"/>
</dbReference>
<dbReference type="CDD" id="cd00983">
    <property type="entry name" value="RecA"/>
    <property type="match status" value="1"/>
</dbReference>
<dbReference type="FunFam" id="3.40.50.300:FF:000087">
    <property type="entry name" value="Recombinase RecA"/>
    <property type="match status" value="1"/>
</dbReference>
<dbReference type="Gene3D" id="3.40.50.300">
    <property type="entry name" value="P-loop containing nucleotide triphosphate hydrolases"/>
    <property type="match status" value="1"/>
</dbReference>
<dbReference type="HAMAP" id="MF_00268">
    <property type="entry name" value="RecA"/>
    <property type="match status" value="1"/>
</dbReference>
<dbReference type="InterPro" id="IPR003593">
    <property type="entry name" value="AAA+_ATPase"/>
</dbReference>
<dbReference type="InterPro" id="IPR013765">
    <property type="entry name" value="DNA_recomb/repair_RecA"/>
</dbReference>
<dbReference type="InterPro" id="IPR020584">
    <property type="entry name" value="DNA_recomb/repair_RecA_CS"/>
</dbReference>
<dbReference type="InterPro" id="IPR027417">
    <property type="entry name" value="P-loop_NTPase"/>
</dbReference>
<dbReference type="InterPro" id="IPR049261">
    <property type="entry name" value="RecA-like_C"/>
</dbReference>
<dbReference type="InterPro" id="IPR049428">
    <property type="entry name" value="RecA-like_N"/>
</dbReference>
<dbReference type="InterPro" id="IPR020588">
    <property type="entry name" value="RecA_ATP-bd"/>
</dbReference>
<dbReference type="InterPro" id="IPR023400">
    <property type="entry name" value="RecA_C_sf"/>
</dbReference>
<dbReference type="InterPro" id="IPR020587">
    <property type="entry name" value="RecA_monomer-monomer_interface"/>
</dbReference>
<dbReference type="NCBIfam" id="TIGR02012">
    <property type="entry name" value="tigrfam_recA"/>
    <property type="match status" value="1"/>
</dbReference>
<dbReference type="PANTHER" id="PTHR45900:SF1">
    <property type="entry name" value="MITOCHONDRIAL DNA REPAIR PROTEIN RECA HOMOLOG-RELATED"/>
    <property type="match status" value="1"/>
</dbReference>
<dbReference type="PANTHER" id="PTHR45900">
    <property type="entry name" value="RECA"/>
    <property type="match status" value="1"/>
</dbReference>
<dbReference type="Pfam" id="PF00154">
    <property type="entry name" value="RecA"/>
    <property type="match status" value="1"/>
</dbReference>
<dbReference type="Pfam" id="PF21096">
    <property type="entry name" value="RecA_C"/>
    <property type="match status" value="1"/>
</dbReference>
<dbReference type="PRINTS" id="PR00142">
    <property type="entry name" value="RECA"/>
</dbReference>
<dbReference type="SMART" id="SM00382">
    <property type="entry name" value="AAA"/>
    <property type="match status" value="1"/>
</dbReference>
<dbReference type="SUPFAM" id="SSF52540">
    <property type="entry name" value="P-loop containing nucleoside triphosphate hydrolases"/>
    <property type="match status" value="1"/>
</dbReference>
<dbReference type="SUPFAM" id="SSF54752">
    <property type="entry name" value="RecA protein, C-terminal domain"/>
    <property type="match status" value="1"/>
</dbReference>
<dbReference type="PROSITE" id="PS00321">
    <property type="entry name" value="RECA_1"/>
    <property type="match status" value="1"/>
</dbReference>
<dbReference type="PROSITE" id="PS50162">
    <property type="entry name" value="RECA_2"/>
    <property type="match status" value="1"/>
</dbReference>
<dbReference type="PROSITE" id="PS50163">
    <property type="entry name" value="RECA_3"/>
    <property type="match status" value="1"/>
</dbReference>
<sequence length="363" mass="39609">MSKLKDKIDDSLNDRLNREKAIELARIQIEKDFGKGSLIKMGESPVGKGIESISSGSILLDEAIGVGGYPRGRIIEIFGPESSGKTTLTLQAISEVQKNGGIAAFIDAEHALDPVYAKALGVNIDELWLSQPDTGEQALEIAEYLIRSGGVDLIVVDSVAALTPQAEIDGEMGDCQIGLQARLMSKALRKITGILSKSKTCIMFINQLRMKIGVMFGNPETTTGGNALKFYSSLRLEVRKIEQVTGSSADDVVGNKVRVKVVKNKVAPPFRKIELVIYFGKGISREASILDASIKYKLIQKIGSWYSIGDDKLGQGRESAIIYLIKEKELTNELEIKLRKIIFEGLSPDSIEIGPPNVKKDKE</sequence>
<comment type="function">
    <text evidence="1">Can catalyze the hydrolysis of ATP in the presence of single-stranded DNA, the ATP-dependent uptake of single-stranded DNA by duplex DNA, and the ATP-dependent hybridization of homologous single-stranded DNAs. It interacts with LexA causing its activation and leading to its autocatalytic cleavage.</text>
</comment>
<comment type="subcellular location">
    <subcellularLocation>
        <location evidence="1">Cytoplasm</location>
    </subcellularLocation>
</comment>
<comment type="similarity">
    <text evidence="1">Belongs to the RecA family.</text>
</comment>
<reference key="1">
    <citation type="submission" date="2004-12" db="EMBL/GenBank/DDBJ databases">
        <title>The genome sequence of Borrelia hermsii and Borrelia turicatae: comparative analysis of two agents of endemic N. America relapsing fever.</title>
        <authorList>
            <person name="Porcella S.F."/>
            <person name="Raffel S.J."/>
            <person name="Schrumpf M.E."/>
            <person name="Montgomery B."/>
            <person name="Smith T."/>
            <person name="Schwan T.G."/>
        </authorList>
    </citation>
    <scope>NUCLEOTIDE SEQUENCE [LARGE SCALE GENOMIC DNA]</scope>
    <source>
        <strain>91E135</strain>
    </source>
</reference>
<protein>
    <recommendedName>
        <fullName evidence="1">Protein RecA</fullName>
    </recommendedName>
    <alternativeName>
        <fullName evidence="1">Recombinase A</fullName>
    </alternativeName>
</protein>
<organism>
    <name type="scientific">Borrelia turicatae (strain 91E135)</name>
    <dbReference type="NCBI Taxonomy" id="314724"/>
    <lineage>
        <taxon>Bacteria</taxon>
        <taxon>Pseudomonadati</taxon>
        <taxon>Spirochaetota</taxon>
        <taxon>Spirochaetia</taxon>
        <taxon>Spirochaetales</taxon>
        <taxon>Borreliaceae</taxon>
        <taxon>Borrelia</taxon>
    </lineage>
</organism>
<keyword id="KW-0067">ATP-binding</keyword>
<keyword id="KW-0963">Cytoplasm</keyword>
<keyword id="KW-0227">DNA damage</keyword>
<keyword id="KW-0233">DNA recombination</keyword>
<keyword id="KW-0234">DNA repair</keyword>
<keyword id="KW-0238">DNA-binding</keyword>
<keyword id="KW-0547">Nucleotide-binding</keyword>
<keyword id="KW-1185">Reference proteome</keyword>
<keyword id="KW-0742">SOS response</keyword>